<evidence type="ECO:0000255" key="1"/>
<evidence type="ECO:0000269" key="2">
    <source>
    </source>
</evidence>
<evidence type="ECO:0000269" key="3">
    <source>
    </source>
</evidence>
<evidence type="ECO:0000269" key="4">
    <source>
    </source>
</evidence>
<evidence type="ECO:0000269" key="5">
    <source>
    </source>
</evidence>
<evidence type="ECO:0000305" key="6"/>
<evidence type="ECO:0007829" key="7">
    <source>
        <dbReference type="PDB" id="1R48"/>
    </source>
</evidence>
<proteinExistence type="evidence at protein level"/>
<accession>P0C0L7</accession>
<accession>P30848</accession>
<accession>Q2M6J3</accession>
<name>PROP_ECOLI</name>
<dbReference type="EMBL" id="M83089">
    <property type="protein sequence ID" value="AAB00919.1"/>
    <property type="molecule type" value="Genomic_DNA"/>
</dbReference>
<dbReference type="EMBL" id="U14003">
    <property type="protein sequence ID" value="AAA97010.1"/>
    <property type="molecule type" value="Genomic_DNA"/>
</dbReference>
<dbReference type="EMBL" id="U00096">
    <property type="protein sequence ID" value="AAC77072.1"/>
    <property type="molecule type" value="Genomic_DNA"/>
</dbReference>
<dbReference type="EMBL" id="AP009048">
    <property type="protein sequence ID" value="BAE78113.1"/>
    <property type="molecule type" value="Genomic_DNA"/>
</dbReference>
<dbReference type="PIR" id="S32331">
    <property type="entry name" value="S32331"/>
</dbReference>
<dbReference type="RefSeq" id="NP_418535.1">
    <property type="nucleotide sequence ID" value="NC_000913.3"/>
</dbReference>
<dbReference type="RefSeq" id="WP_001298520.1">
    <property type="nucleotide sequence ID" value="NZ_SSZK01000018.1"/>
</dbReference>
<dbReference type="PDB" id="1R48">
    <property type="method" value="NMR"/>
    <property type="chains" value="A/B=468-497"/>
</dbReference>
<dbReference type="PDBsum" id="1R48"/>
<dbReference type="BMRB" id="P0C0L7"/>
<dbReference type="SMR" id="P0C0L7"/>
<dbReference type="BioGRID" id="4263085">
    <property type="interactions" value="22"/>
</dbReference>
<dbReference type="FunCoup" id="P0C0L7">
    <property type="interactions" value="15"/>
</dbReference>
<dbReference type="STRING" id="511145.b4111"/>
<dbReference type="TCDB" id="2.A.1.6.4">
    <property type="family name" value="the major facilitator superfamily (mfs)"/>
</dbReference>
<dbReference type="jPOST" id="P0C0L7"/>
<dbReference type="PaxDb" id="511145-b4111"/>
<dbReference type="EnsemblBacteria" id="AAC77072">
    <property type="protein sequence ID" value="AAC77072"/>
    <property type="gene ID" value="b4111"/>
</dbReference>
<dbReference type="GeneID" id="948626"/>
<dbReference type="KEGG" id="ecj:JW4072"/>
<dbReference type="KEGG" id="eco:b4111"/>
<dbReference type="KEGG" id="ecoc:C3026_22210"/>
<dbReference type="PATRIC" id="fig|1411691.4.peg.2589"/>
<dbReference type="EchoBASE" id="EB1569"/>
<dbReference type="eggNOG" id="COG0477">
    <property type="taxonomic scope" value="Bacteria"/>
</dbReference>
<dbReference type="HOGENOM" id="CLU_001265_39_0_6"/>
<dbReference type="InParanoid" id="P0C0L7"/>
<dbReference type="OMA" id="GYYVVFT"/>
<dbReference type="OrthoDB" id="3690818at2"/>
<dbReference type="PhylomeDB" id="P0C0L7"/>
<dbReference type="BioCyc" id="EcoCyc:PROP-MONOMER"/>
<dbReference type="BioCyc" id="MetaCyc:PROP-MONOMER"/>
<dbReference type="SABIO-RK" id="P0C0L7"/>
<dbReference type="EvolutionaryTrace" id="P0C0L7"/>
<dbReference type="PRO" id="PR:P0C0L7"/>
<dbReference type="Proteomes" id="UP000000625">
    <property type="component" value="Chromosome"/>
</dbReference>
<dbReference type="GO" id="GO:0005886">
    <property type="term" value="C:plasma membrane"/>
    <property type="evidence" value="ECO:0000314"/>
    <property type="project" value="CAFA"/>
</dbReference>
<dbReference type="GO" id="GO:0005297">
    <property type="term" value="F:proline:proton symporter activity"/>
    <property type="evidence" value="ECO:0000314"/>
    <property type="project" value="EcoCyc"/>
</dbReference>
<dbReference type="GO" id="GO:0042803">
    <property type="term" value="F:protein homodimerization activity"/>
    <property type="evidence" value="ECO:0000314"/>
    <property type="project" value="EcoCyc"/>
</dbReference>
<dbReference type="GO" id="GO:0006865">
    <property type="term" value="P:amino acid transport"/>
    <property type="evidence" value="ECO:0000314"/>
    <property type="project" value="EcoliWiki"/>
</dbReference>
<dbReference type="GO" id="GO:0071474">
    <property type="term" value="P:cellular hyperosmotic response"/>
    <property type="evidence" value="ECO:0000314"/>
    <property type="project" value="EcoCyc"/>
</dbReference>
<dbReference type="GO" id="GO:0071475">
    <property type="term" value="P:cellular hyperosmotic salinity response"/>
    <property type="evidence" value="ECO:0000314"/>
    <property type="project" value="CAFA"/>
</dbReference>
<dbReference type="GO" id="GO:0031460">
    <property type="term" value="P:glycine betaine transport"/>
    <property type="evidence" value="ECO:0000314"/>
    <property type="project" value="EcoCyc"/>
</dbReference>
<dbReference type="GO" id="GO:0007231">
    <property type="term" value="P:osmosensory signaling pathway"/>
    <property type="evidence" value="ECO:0000314"/>
    <property type="project" value="CAFA"/>
</dbReference>
<dbReference type="GO" id="GO:1905647">
    <property type="term" value="P:proline import across plasma membrane"/>
    <property type="evidence" value="ECO:0000314"/>
    <property type="project" value="CAFA"/>
</dbReference>
<dbReference type="CDD" id="cd17366">
    <property type="entry name" value="MFS_ProP"/>
    <property type="match status" value="1"/>
</dbReference>
<dbReference type="FunFam" id="1.20.1250.20:FF:000001">
    <property type="entry name" value="Dicarboxylate MFS transporter"/>
    <property type="match status" value="1"/>
</dbReference>
<dbReference type="FunFam" id="1.20.1250.20:FF:000051">
    <property type="entry name" value="Proline/glycine betaine transporter"/>
    <property type="match status" value="1"/>
</dbReference>
<dbReference type="Gene3D" id="1.20.1250.20">
    <property type="entry name" value="MFS general substrate transporter like domains"/>
    <property type="match status" value="2"/>
</dbReference>
<dbReference type="InterPro" id="IPR051084">
    <property type="entry name" value="H+-coupled_symporters"/>
</dbReference>
<dbReference type="InterPro" id="IPR020846">
    <property type="entry name" value="MFS_dom"/>
</dbReference>
<dbReference type="InterPro" id="IPR005828">
    <property type="entry name" value="MFS_sugar_transport-like"/>
</dbReference>
<dbReference type="InterPro" id="IPR036259">
    <property type="entry name" value="MFS_trans_sf"/>
</dbReference>
<dbReference type="InterPro" id="IPR004736">
    <property type="entry name" value="MHS_symport"/>
</dbReference>
<dbReference type="InterPro" id="IPR015041">
    <property type="entry name" value="Osmo_CC"/>
</dbReference>
<dbReference type="InterPro" id="IPR036292">
    <property type="entry name" value="ProP_C"/>
</dbReference>
<dbReference type="InterPro" id="IPR005829">
    <property type="entry name" value="Sugar_transporter_CS"/>
</dbReference>
<dbReference type="NCBIfam" id="TIGR00883">
    <property type="entry name" value="2A0106"/>
    <property type="match status" value="1"/>
</dbReference>
<dbReference type="NCBIfam" id="NF007927">
    <property type="entry name" value="PRK10642.1"/>
    <property type="match status" value="1"/>
</dbReference>
<dbReference type="PANTHER" id="PTHR43528">
    <property type="entry name" value="ALPHA-KETOGLUTARATE PERMEASE"/>
    <property type="match status" value="1"/>
</dbReference>
<dbReference type="PANTHER" id="PTHR43528:SF5">
    <property type="entry name" value="PROLINE_BETAINE TRANSPORTER"/>
    <property type="match status" value="1"/>
</dbReference>
<dbReference type="Pfam" id="PF08946">
    <property type="entry name" value="Osmo_CC"/>
    <property type="match status" value="1"/>
</dbReference>
<dbReference type="Pfam" id="PF00083">
    <property type="entry name" value="Sugar_tr"/>
    <property type="match status" value="1"/>
</dbReference>
<dbReference type="SUPFAM" id="SSF103473">
    <property type="entry name" value="MFS general substrate transporter"/>
    <property type="match status" value="1"/>
</dbReference>
<dbReference type="SUPFAM" id="SSF103661">
    <property type="entry name" value="Proline/betaine transporter ProP, C-terminal cytoplasmic domain"/>
    <property type="match status" value="1"/>
</dbReference>
<dbReference type="PROSITE" id="PS50850">
    <property type="entry name" value="MFS"/>
    <property type="match status" value="1"/>
</dbReference>
<dbReference type="PROSITE" id="PS00216">
    <property type="entry name" value="SUGAR_TRANSPORT_1"/>
    <property type="match status" value="1"/>
</dbReference>
<reference key="1">
    <citation type="journal article" date="1993" name="J. Mol. Biol.">
        <title>Isolation and sequencing of Escherichia coli gene proP reveals unusual structural features of the osmoregulatory proline/betaine transporter, ProP.</title>
        <authorList>
            <person name="Culham D.E."/>
            <person name="Lasby B."/>
            <person name="Marangoni A.G."/>
            <person name="Milner J.L."/>
            <person name="Steer B.A."/>
            <person name="van Nues R.W."/>
            <person name="Wood J.M."/>
        </authorList>
    </citation>
    <scope>NUCLEOTIDE SEQUENCE [GENOMIC DNA]</scope>
    <scope>FUNCTION</scope>
</reference>
<reference key="2">
    <citation type="journal article" date="1995" name="Nucleic Acids Res.">
        <title>Analysis of the Escherichia coli genome VI: DNA sequence of the region from 92.8 through 100 minutes.</title>
        <authorList>
            <person name="Burland V.D."/>
            <person name="Plunkett G. III"/>
            <person name="Sofia H.J."/>
            <person name="Daniels D.L."/>
            <person name="Blattner F.R."/>
        </authorList>
    </citation>
    <scope>NUCLEOTIDE SEQUENCE [LARGE SCALE GENOMIC DNA]</scope>
    <source>
        <strain>K12 / MG1655 / ATCC 47076</strain>
    </source>
</reference>
<reference key="3">
    <citation type="journal article" date="1997" name="Science">
        <title>The complete genome sequence of Escherichia coli K-12.</title>
        <authorList>
            <person name="Blattner F.R."/>
            <person name="Plunkett G. III"/>
            <person name="Bloch C.A."/>
            <person name="Perna N.T."/>
            <person name="Burland V."/>
            <person name="Riley M."/>
            <person name="Collado-Vides J."/>
            <person name="Glasner J.D."/>
            <person name="Rode C.K."/>
            <person name="Mayhew G.F."/>
            <person name="Gregor J."/>
            <person name="Davis N.W."/>
            <person name="Kirkpatrick H.A."/>
            <person name="Goeden M.A."/>
            <person name="Rose D.J."/>
            <person name="Mau B."/>
            <person name="Shao Y."/>
        </authorList>
    </citation>
    <scope>NUCLEOTIDE SEQUENCE [LARGE SCALE GENOMIC DNA]</scope>
    <source>
        <strain>K12 / MG1655 / ATCC 47076</strain>
    </source>
</reference>
<reference key="4">
    <citation type="journal article" date="2006" name="Mol. Syst. Biol.">
        <title>Highly accurate genome sequences of Escherichia coli K-12 strains MG1655 and W3110.</title>
        <authorList>
            <person name="Hayashi K."/>
            <person name="Morooka N."/>
            <person name="Yamamoto Y."/>
            <person name="Fujita K."/>
            <person name="Isono K."/>
            <person name="Choi S."/>
            <person name="Ohtsubo E."/>
            <person name="Baba T."/>
            <person name="Wanner B.L."/>
            <person name="Mori H."/>
            <person name="Horiuchi T."/>
        </authorList>
    </citation>
    <scope>NUCLEOTIDE SEQUENCE [LARGE SCALE GENOMIC DNA]</scope>
    <source>
        <strain>K12 / W3110 / ATCC 27325 / DSM 5911</strain>
    </source>
</reference>
<reference key="5">
    <citation type="journal article" date="1986" name="J. Bacteriol.">
        <title>proP-mediated proline transport also plays a role in Escherichia coli osmoregulation.</title>
        <authorList>
            <person name="Gowrishankar J."/>
        </authorList>
    </citation>
    <scope>FUNCTION</scope>
    <scope>INDUCTION</scope>
    <source>
        <strain>K12</strain>
    </source>
</reference>
<reference key="6">
    <citation type="journal article" date="1999" name="Biochemistry">
        <title>Purification and reconstitution of an osmosensor: transporter ProP of Escherichia coli senses and responds to osmotic shifts.</title>
        <authorList>
            <person name="Racher K.I."/>
            <person name="Voegele R.T."/>
            <person name="Marshall E.V."/>
            <person name="Culham D.E."/>
            <person name="Wood J.M."/>
            <person name="Jung H."/>
            <person name="Bacon M."/>
            <person name="Cairns M.T."/>
            <person name="Ferguson S.M."/>
            <person name="Liang W.J."/>
            <person name="Henderson P.J."/>
            <person name="White G."/>
            <person name="Hallett F.R."/>
        </authorList>
    </citation>
    <scope>FUNCTION</scope>
    <scope>BIOPHYSICOCHEMICAL PROPERTIES</scope>
    <scope>SUBCELLULAR LOCATION</scope>
</reference>
<reference key="7">
    <citation type="journal article" date="2005" name="Science">
        <title>Global topology analysis of the Escherichia coli inner membrane proteome.</title>
        <authorList>
            <person name="Daley D.O."/>
            <person name="Rapp M."/>
            <person name="Granseth E."/>
            <person name="Melen K."/>
            <person name="Drew D."/>
            <person name="von Heijne G."/>
        </authorList>
    </citation>
    <scope>TOPOLOGY [LARGE SCALE ANALYSIS]</scope>
    <scope>SUBCELLULAR LOCATION</scope>
    <source>
        <strain>K12 / MG1655 / ATCC 47076</strain>
    </source>
</reference>
<reference key="8">
    <citation type="journal article" date="2003" name="J. Mol. Biol.">
        <title>Solution structure of the C-terminal antiparallel coiled-coil domain from Escherichia coli osmosensor ProP.</title>
        <authorList>
            <person name="Zoetewey D.L."/>
            <person name="Tripet B.P."/>
            <person name="Kutateladze T.G."/>
            <person name="Overduin M.J."/>
            <person name="Wood J.M."/>
            <person name="Hodges R.S."/>
        </authorList>
    </citation>
    <scope>STRUCTURE BY NMR OF 464-498</scope>
</reference>
<gene>
    <name type="primary">proP</name>
    <name type="ordered locus">b4111</name>
    <name type="ordered locus">JW4072</name>
</gene>
<keyword id="KW-0002">3D-structure</keyword>
<keyword id="KW-0997">Cell inner membrane</keyword>
<keyword id="KW-1003">Cell membrane</keyword>
<keyword id="KW-0175">Coiled coil</keyword>
<keyword id="KW-0472">Membrane</keyword>
<keyword id="KW-1185">Reference proteome</keyword>
<keyword id="KW-0769">Symport</keyword>
<keyword id="KW-0812">Transmembrane</keyword>
<keyword id="KW-1133">Transmembrane helix</keyword>
<keyword id="KW-0813">Transport</keyword>
<comment type="function">
    <text evidence="2 4 5">Proton symporter that senses osmotic shifts and responds by importing osmolytes such as proline, glycine betaine, stachydrine, pipecolic acid, ectoine and taurine. It is both an osmosensor and an osmoregulator which is available to participate early in the bacterial osmoregulatory response.</text>
</comment>
<comment type="biophysicochemical properties">
    <kinetics>
        <KM evidence="2">175 uM for proline</KM>
        <Vmax evidence="2">83.6 nmol/min/mg enzyme with proline as substrate</Vmax>
    </kinetics>
</comment>
<comment type="subcellular location">
    <subcellularLocation>
        <location evidence="2 3">Cell inner membrane</location>
        <topology evidence="1">Multi-pass membrane protein</topology>
    </subcellularLocation>
</comment>
<comment type="induction">
    <text evidence="4">Induced by an increase in the osmolarity of the growth medium.</text>
</comment>
<comment type="similarity">
    <text evidence="6">Belongs to the major facilitator superfamily. Metabolite:H+ Symporter (MHS) family (TC 2.A.1.6) family.</text>
</comment>
<organism>
    <name type="scientific">Escherichia coli (strain K12)</name>
    <dbReference type="NCBI Taxonomy" id="83333"/>
    <lineage>
        <taxon>Bacteria</taxon>
        <taxon>Pseudomonadati</taxon>
        <taxon>Pseudomonadota</taxon>
        <taxon>Gammaproteobacteria</taxon>
        <taxon>Enterobacterales</taxon>
        <taxon>Enterobacteriaceae</taxon>
        <taxon>Escherichia</taxon>
    </lineage>
</organism>
<protein>
    <recommendedName>
        <fullName>Proline/betaine transporter</fullName>
    </recommendedName>
    <alternativeName>
        <fullName>Proline porter II</fullName>
        <shortName>PPII</shortName>
    </alternativeName>
</protein>
<feature type="chain" id="PRO_0000050324" description="Proline/betaine transporter">
    <location>
        <begin position="1"/>
        <end position="500"/>
    </location>
</feature>
<feature type="topological domain" description="Cytoplasmic" evidence="1">
    <location>
        <begin position="1"/>
        <end position="37"/>
    </location>
</feature>
<feature type="transmembrane region" description="Helical; Name=1" evidence="1">
    <location>
        <begin position="38"/>
        <end position="58"/>
    </location>
</feature>
<feature type="topological domain" description="Periplasmic" evidence="1">
    <location>
        <begin position="59"/>
        <end position="65"/>
    </location>
</feature>
<feature type="transmembrane region" description="Helical; Name=2" evidence="1">
    <location>
        <begin position="66"/>
        <end position="86"/>
    </location>
</feature>
<feature type="topological domain" description="Cytoplasmic" evidence="1">
    <location>
        <begin position="87"/>
        <end position="97"/>
    </location>
</feature>
<feature type="transmembrane region" description="Helical; Name=3" evidence="1">
    <location>
        <begin position="98"/>
        <end position="118"/>
    </location>
</feature>
<feature type="topological domain" description="Periplasmic" evidence="1">
    <location>
        <begin position="119"/>
        <end position="121"/>
    </location>
</feature>
<feature type="transmembrane region" description="Helical; Name=4" evidence="1">
    <location>
        <begin position="122"/>
        <end position="142"/>
    </location>
</feature>
<feature type="topological domain" description="Cytoplasmic" evidence="1">
    <location>
        <begin position="143"/>
        <end position="169"/>
    </location>
</feature>
<feature type="transmembrane region" description="Helical; Name=5" evidence="1">
    <location>
        <begin position="170"/>
        <end position="190"/>
    </location>
</feature>
<feature type="topological domain" description="Periplasmic" evidence="1">
    <location>
        <begin position="191"/>
        <end position="194"/>
    </location>
</feature>
<feature type="transmembrane region" description="Helical; Name=6" evidence="1">
    <location>
        <begin position="195"/>
        <end position="215"/>
    </location>
</feature>
<feature type="topological domain" description="Cytoplasmic" evidence="1">
    <location>
        <begin position="216"/>
        <end position="260"/>
    </location>
</feature>
<feature type="transmembrane region" description="Helical; Name=7" evidence="1">
    <location>
        <begin position="261"/>
        <end position="281"/>
    </location>
</feature>
<feature type="topological domain" description="Periplasmic" evidence="1">
    <location>
        <begin position="282"/>
        <end position="297"/>
    </location>
</feature>
<feature type="transmembrane region" description="Helical; Name=8" evidence="1">
    <location>
        <begin position="298"/>
        <end position="318"/>
    </location>
</feature>
<feature type="topological domain" description="Cytoplasmic" evidence="1">
    <location>
        <begin position="319"/>
        <end position="325"/>
    </location>
</feature>
<feature type="transmembrane region" description="Helical; Name=9" evidence="1">
    <location>
        <begin position="326"/>
        <end position="346"/>
    </location>
</feature>
<feature type="topological domain" description="Periplasmic" evidence="1">
    <location>
        <begin position="347"/>
        <end position="350"/>
    </location>
</feature>
<feature type="transmembrane region" description="Helical; Name=10" evidence="1">
    <location>
        <begin position="351"/>
        <end position="371"/>
    </location>
</feature>
<feature type="topological domain" description="Cytoplasmic" evidence="1">
    <location>
        <begin position="372"/>
        <end position="390"/>
    </location>
</feature>
<feature type="transmembrane region" description="Helical; Name=11" evidence="1">
    <location>
        <begin position="391"/>
        <end position="411"/>
    </location>
</feature>
<feature type="topological domain" description="Periplasmic" evidence="1">
    <location>
        <begin position="412"/>
        <end position="416"/>
    </location>
</feature>
<feature type="transmembrane region" description="Helical; Name=12" evidence="1">
    <location>
        <begin position="417"/>
        <end position="437"/>
    </location>
</feature>
<feature type="topological domain" description="Cytoplasmic" evidence="3">
    <location>
        <begin position="438"/>
        <end position="500"/>
    </location>
</feature>
<feature type="coiled-coil region" evidence="1">
    <location>
        <begin position="453"/>
        <end position="498"/>
    </location>
</feature>
<feature type="helix" evidence="7">
    <location>
        <begin position="469"/>
        <end position="494"/>
    </location>
</feature>
<sequence length="500" mass="54846">MLKRKKVKPITLRDVTIIDDGKLRKAITAASLGNAMEWFDFGVYGFVAYALGKVFFPGADPSVQMVAALATFSVPFLIRPLGGLFFGMLGDKYGRQKILAITIVIMSISTFCIGLIPSYDTIGIWAPILLLICKMAQGFSVGGEYTGASIFVAEYSPDRKRGFMGSWLDFGSIAGFVLGAGVVVLISTIVGEANFLDWGWRIPFFIALPLGIIGLYLRHALEETPAFQQHVDKLEQGDREGLQDGPKVSFKEIATKYWRSLLTCIGLVIATNVTYYMLLTYMPSYLSHNLHYSEDHGVLIIIAIMIGMLFVQPVMGLLSDRFGRRPFVLLGSVALFVLAIPAFILINSNVIGLIFAGLLMLAVILNCFTGVMASTLPAMFPTHIRYSALAAAFNISVLVAGLTPTLAAWLVESSQNLMMPAYYLMVVAVVGLITGVTMKETANRPLKGATPAASDIQEAKEILVEHYDNIEQKIDDIDHEIADLQAKRTRLVQQHPRIDE</sequence>